<proteinExistence type="inferred from homology"/>
<feature type="chain" id="PRO_1000138071" description="tRNA-modifying protein YgfZ">
    <location>
        <begin position="1"/>
        <end position="326"/>
    </location>
</feature>
<feature type="binding site" evidence="1">
    <location>
        <position position="27"/>
    </location>
    <ligand>
        <name>folate</name>
        <dbReference type="ChEBI" id="CHEBI:62501"/>
    </ligand>
</feature>
<feature type="binding site" evidence="1">
    <location>
        <position position="189"/>
    </location>
    <ligand>
        <name>folate</name>
        <dbReference type="ChEBI" id="CHEBI:62501"/>
    </ligand>
</feature>
<dbReference type="EMBL" id="CU928164">
    <property type="protein sequence ID" value="CAR19432.1"/>
    <property type="molecule type" value="Genomic_DNA"/>
</dbReference>
<dbReference type="RefSeq" id="WP_000886087.1">
    <property type="nucleotide sequence ID" value="NC_011750.1"/>
</dbReference>
<dbReference type="RefSeq" id="YP_002409236.1">
    <property type="nucleotide sequence ID" value="NC_011750.1"/>
</dbReference>
<dbReference type="SMR" id="B7NW39"/>
<dbReference type="STRING" id="585057.ECIAI39_3314"/>
<dbReference type="KEGG" id="ect:ECIAI39_3314"/>
<dbReference type="PATRIC" id="fig|585057.6.peg.3438"/>
<dbReference type="HOGENOM" id="CLU_007884_6_1_6"/>
<dbReference type="Proteomes" id="UP000000749">
    <property type="component" value="Chromosome"/>
</dbReference>
<dbReference type="GO" id="GO:0005737">
    <property type="term" value="C:cytoplasm"/>
    <property type="evidence" value="ECO:0007669"/>
    <property type="project" value="UniProtKB-SubCell"/>
</dbReference>
<dbReference type="GO" id="GO:0005542">
    <property type="term" value="F:folic acid binding"/>
    <property type="evidence" value="ECO:0007669"/>
    <property type="project" value="UniProtKB-UniRule"/>
</dbReference>
<dbReference type="GO" id="GO:0016226">
    <property type="term" value="P:iron-sulfur cluster assembly"/>
    <property type="evidence" value="ECO:0007669"/>
    <property type="project" value="TreeGrafter"/>
</dbReference>
<dbReference type="GO" id="GO:0009451">
    <property type="term" value="P:RNA modification"/>
    <property type="evidence" value="ECO:0007669"/>
    <property type="project" value="InterPro"/>
</dbReference>
<dbReference type="GO" id="GO:0008033">
    <property type="term" value="P:tRNA processing"/>
    <property type="evidence" value="ECO:0007669"/>
    <property type="project" value="UniProtKB-UniRule"/>
</dbReference>
<dbReference type="FunFam" id="2.40.30.160:FF:000001">
    <property type="entry name" value="tRNA-modifying protein YgfZ"/>
    <property type="match status" value="1"/>
</dbReference>
<dbReference type="FunFam" id="3.30.70.1400:FF:000002">
    <property type="entry name" value="tRNA-modifying protein YgfZ"/>
    <property type="match status" value="1"/>
</dbReference>
<dbReference type="FunFam" id="3.30.70.1630:FF:000001">
    <property type="entry name" value="tRNA-modifying protein YgfZ"/>
    <property type="match status" value="1"/>
</dbReference>
<dbReference type="Gene3D" id="2.40.30.160">
    <property type="match status" value="1"/>
</dbReference>
<dbReference type="Gene3D" id="3.30.70.1630">
    <property type="match status" value="1"/>
</dbReference>
<dbReference type="Gene3D" id="3.30.70.1400">
    <property type="entry name" value="Aminomethyltransferase beta-barrel domains"/>
    <property type="match status" value="1"/>
</dbReference>
<dbReference type="HAMAP" id="MF_01175">
    <property type="entry name" value="tRNA_modifying_YgfZ"/>
    <property type="match status" value="1"/>
</dbReference>
<dbReference type="InterPro" id="IPR006222">
    <property type="entry name" value="GCV_T_N"/>
</dbReference>
<dbReference type="InterPro" id="IPR029043">
    <property type="entry name" value="GcvT/YgfZ_C"/>
</dbReference>
<dbReference type="InterPro" id="IPR023758">
    <property type="entry name" value="tRNA-modifying_YgfZ"/>
</dbReference>
<dbReference type="InterPro" id="IPR045179">
    <property type="entry name" value="YgfZ/GcvT"/>
</dbReference>
<dbReference type="InterPro" id="IPR017703">
    <property type="entry name" value="YgfZ/GcvT_CS"/>
</dbReference>
<dbReference type="InterPro" id="IPR048451">
    <property type="entry name" value="YgfZ_barrel"/>
</dbReference>
<dbReference type="NCBIfam" id="NF007110">
    <property type="entry name" value="PRK09559.1"/>
    <property type="match status" value="1"/>
</dbReference>
<dbReference type="NCBIfam" id="TIGR03317">
    <property type="entry name" value="ygfZ_signature"/>
    <property type="match status" value="1"/>
</dbReference>
<dbReference type="PANTHER" id="PTHR22602">
    <property type="entry name" value="TRANSFERASE CAF17, MITOCHONDRIAL-RELATED"/>
    <property type="match status" value="1"/>
</dbReference>
<dbReference type="PANTHER" id="PTHR22602:SF0">
    <property type="entry name" value="TRANSFERASE CAF17, MITOCHONDRIAL-RELATED"/>
    <property type="match status" value="1"/>
</dbReference>
<dbReference type="Pfam" id="PF01571">
    <property type="entry name" value="GCV_T"/>
    <property type="match status" value="1"/>
</dbReference>
<dbReference type="Pfam" id="PF21130">
    <property type="entry name" value="YgfZ_barrel"/>
    <property type="match status" value="1"/>
</dbReference>
<dbReference type="SUPFAM" id="SSF101790">
    <property type="entry name" value="Aminomethyltransferase beta-barrel domain"/>
    <property type="match status" value="1"/>
</dbReference>
<dbReference type="SUPFAM" id="SSF103025">
    <property type="entry name" value="Folate-binding domain"/>
    <property type="match status" value="1"/>
</dbReference>
<keyword id="KW-0963">Cytoplasm</keyword>
<keyword id="KW-0290">Folate-binding</keyword>
<keyword id="KW-0819">tRNA processing</keyword>
<accession>B7NW39</accession>
<name>YGFZ_ECO7I</name>
<gene>
    <name evidence="1" type="primary">ygfZ</name>
    <name type="ordered locus">ECIAI39_3314</name>
</gene>
<organism>
    <name type="scientific">Escherichia coli O7:K1 (strain IAI39 / ExPEC)</name>
    <dbReference type="NCBI Taxonomy" id="585057"/>
    <lineage>
        <taxon>Bacteria</taxon>
        <taxon>Pseudomonadati</taxon>
        <taxon>Pseudomonadota</taxon>
        <taxon>Gammaproteobacteria</taxon>
        <taxon>Enterobacterales</taxon>
        <taxon>Enterobacteriaceae</taxon>
        <taxon>Escherichia</taxon>
    </lineage>
</organism>
<sequence>MAFTPFPPRQPTASARLPLTLMTLDDWALATITGADSEKYMQGQVTADVSQMTEDQHLLAAHCDAKGKMWSNLRLFRDGDGFAWIERRSVRESQLTELKKYAVFSKVTIAPDDERVLLGVAGFQARAALANIFSELPSKEKQVVKEGATTLLWFEHPAERFLIVTDEATANMLTDKLRGEAELNNSQQWLALNIEAGFPVIDAANSGQFIPQATNLQALGGISFKKGCYTGQEMVARAKFRGANKRALWLLAGSASRLPEAGEDLELKMGENWRRTGTVLAAVKLEDGQVVVQVVMNNDMEPDSIFRVRDDANTLRIEPLPYSLEE</sequence>
<protein>
    <recommendedName>
        <fullName evidence="1">tRNA-modifying protein YgfZ</fullName>
    </recommendedName>
</protein>
<evidence type="ECO:0000255" key="1">
    <source>
        <dbReference type="HAMAP-Rule" id="MF_01175"/>
    </source>
</evidence>
<comment type="function">
    <text evidence="1">Folate-binding protein involved in regulating the level of ATP-DnaA and in the modification of some tRNAs. It is probably a key factor in regulatory networks that act via tRNA modification, such as initiation of chromosomal replication.</text>
</comment>
<comment type="subcellular location">
    <subcellularLocation>
        <location evidence="1">Cytoplasm</location>
    </subcellularLocation>
</comment>
<comment type="similarity">
    <text evidence="1">Belongs to the tRNA-modifying YgfZ family.</text>
</comment>
<reference key="1">
    <citation type="journal article" date="2009" name="PLoS Genet.">
        <title>Organised genome dynamics in the Escherichia coli species results in highly diverse adaptive paths.</title>
        <authorList>
            <person name="Touchon M."/>
            <person name="Hoede C."/>
            <person name="Tenaillon O."/>
            <person name="Barbe V."/>
            <person name="Baeriswyl S."/>
            <person name="Bidet P."/>
            <person name="Bingen E."/>
            <person name="Bonacorsi S."/>
            <person name="Bouchier C."/>
            <person name="Bouvet O."/>
            <person name="Calteau A."/>
            <person name="Chiapello H."/>
            <person name="Clermont O."/>
            <person name="Cruveiller S."/>
            <person name="Danchin A."/>
            <person name="Diard M."/>
            <person name="Dossat C."/>
            <person name="Karoui M.E."/>
            <person name="Frapy E."/>
            <person name="Garry L."/>
            <person name="Ghigo J.M."/>
            <person name="Gilles A.M."/>
            <person name="Johnson J."/>
            <person name="Le Bouguenec C."/>
            <person name="Lescat M."/>
            <person name="Mangenot S."/>
            <person name="Martinez-Jehanne V."/>
            <person name="Matic I."/>
            <person name="Nassif X."/>
            <person name="Oztas S."/>
            <person name="Petit M.A."/>
            <person name="Pichon C."/>
            <person name="Rouy Z."/>
            <person name="Ruf C.S."/>
            <person name="Schneider D."/>
            <person name="Tourret J."/>
            <person name="Vacherie B."/>
            <person name="Vallenet D."/>
            <person name="Medigue C."/>
            <person name="Rocha E.P.C."/>
            <person name="Denamur E."/>
        </authorList>
    </citation>
    <scope>NUCLEOTIDE SEQUENCE [LARGE SCALE GENOMIC DNA]</scope>
    <source>
        <strain>IAI39 / ExPEC</strain>
    </source>
</reference>